<comment type="function">
    <text>Inhibits vitellogenesis in female animals. Plays a prominent role in the regulation of reproduction/molting processes.</text>
</comment>
<comment type="subcellular location">
    <subcellularLocation>
        <location>Secreted</location>
    </subcellularLocation>
</comment>
<comment type="tissue specificity">
    <text>Produced in the eyestalk X-organ sinus gland complex of male and female lobsters.</text>
</comment>
<comment type="mass spectrometry"/>
<comment type="similarity">
    <text evidence="4">Belongs to the arthropod CHH/MIH/GIH/VIH hormone family.</text>
</comment>
<organism>
    <name type="scientific">Homarus americanus</name>
    <name type="common">American lobster</name>
    <dbReference type="NCBI Taxonomy" id="6706"/>
    <lineage>
        <taxon>Eukaryota</taxon>
        <taxon>Metazoa</taxon>
        <taxon>Ecdysozoa</taxon>
        <taxon>Arthropoda</taxon>
        <taxon>Crustacea</taxon>
        <taxon>Multicrustacea</taxon>
        <taxon>Malacostraca</taxon>
        <taxon>Eumalacostraca</taxon>
        <taxon>Eucarida</taxon>
        <taxon>Decapoda</taxon>
        <taxon>Pleocyemata</taxon>
        <taxon>Astacidea</taxon>
        <taxon>Nephropoidea</taxon>
        <taxon>Nephropidae</taxon>
        <taxon>Homarus</taxon>
    </lineage>
</organism>
<evidence type="ECO:0000250" key="1"/>
<evidence type="ECO:0000255" key="2"/>
<evidence type="ECO:0000269" key="3">
    <source>
    </source>
</evidence>
<evidence type="ECO:0000305" key="4"/>
<feature type="signal peptide" evidence="3">
    <location>
        <begin position="1"/>
        <end position="31"/>
    </location>
</feature>
<feature type="peptide" id="PRO_0000019075" description="Gonad-inhibiting hormone">
    <location>
        <begin position="32"/>
        <end position="109"/>
    </location>
</feature>
<feature type="modified residue" description="Alanine amide" evidence="2">
    <location>
        <position position="109"/>
    </location>
</feature>
<feature type="disulfide bond" evidence="1">
    <location>
        <begin position="41"/>
        <end position="78"/>
    </location>
</feature>
<feature type="disulfide bond" evidence="1">
    <location>
        <begin position="58"/>
        <end position="74"/>
    </location>
</feature>
<feature type="disulfide bond" evidence="1">
    <location>
        <begin position="61"/>
        <end position="87"/>
    </location>
</feature>
<feature type="sequence conflict" description="In Ref. 2; AA sequence." evidence="4" ref="2">
    <original>D</original>
    <variation>W</variation>
    <location>
        <position position="83"/>
    </location>
</feature>
<protein>
    <recommendedName>
        <fullName>Gonad-inhibiting hormone</fullName>
        <shortName>GIH</shortName>
    </recommendedName>
    <alternativeName>
        <fullName>Vitellogenesis-inhibiting hormone</fullName>
        <shortName>VIH</shortName>
    </alternativeName>
</protein>
<reference key="1">
    <citation type="journal article" date="1994" name="FEBS Lett.">
        <title>Cloning and expression of mRNA encoding prepro-gonad-inhibiting hormone (GIH) in the lobster Homarus americanus.</title>
        <authorList>
            <person name="de Kleijn D.P.V."/>
            <person name="Sleutels F.J.G.T."/>
            <person name="Martens G.J.M."/>
            <person name="van Herp F."/>
        </authorList>
    </citation>
    <scope>NUCLEOTIDE SEQUENCE [MRNA]</scope>
    <source>
        <tissue>Eyestalk</tissue>
    </source>
</reference>
<reference key="2">
    <citation type="journal article" date="1991" name="Neuropeptides">
        <title>Primary structure of two isoforms of the vitellogenesis inhibiting hormone from the lobster Homarus americanus.</title>
        <authorList>
            <person name="Soyez D."/>
            <person name="Le Caer J.-P."/>
            <person name="Noel P.Y."/>
            <person name="Rossier J."/>
        </authorList>
    </citation>
    <scope>PROTEIN SEQUENCE OF 32-108</scope>
    <scope>MASS SPECTROMETRY</scope>
    <source>
        <tissue>Sinus gland</tissue>
    </source>
</reference>
<sequence>MVTRVGSGFSVQRVWLLLVIVVVLCGSVTQQASAWFTNDECPGVMGNRDLYEKVAWVCNDCANIFRNNDVGVMCKKDCFHTMDFLWCVYATERHGEIDQFRKWVSILRAGRK</sequence>
<proteinExistence type="evidence at protein level"/>
<name>GIH_HOMAM</name>
<keyword id="KW-0027">Amidation</keyword>
<keyword id="KW-0903">Direct protein sequencing</keyword>
<keyword id="KW-1015">Disulfide bond</keyword>
<keyword id="KW-0372">Hormone</keyword>
<keyword id="KW-0527">Neuropeptide</keyword>
<keyword id="KW-0964">Secreted</keyword>
<keyword id="KW-0732">Signal</keyword>
<dbReference type="EMBL" id="X87192">
    <property type="protein sequence ID" value="CAA60644.1"/>
    <property type="molecule type" value="mRNA"/>
</dbReference>
<dbReference type="PIR" id="A45586">
    <property type="entry name" value="A45586"/>
</dbReference>
<dbReference type="PIR" id="S48747">
    <property type="entry name" value="S48747"/>
</dbReference>
<dbReference type="SMR" id="P55320"/>
<dbReference type="OrthoDB" id="6365952at2759"/>
<dbReference type="GO" id="GO:0005576">
    <property type="term" value="C:extracellular region"/>
    <property type="evidence" value="ECO:0007669"/>
    <property type="project" value="UniProtKB-SubCell"/>
</dbReference>
<dbReference type="GO" id="GO:0005184">
    <property type="term" value="F:neuropeptide hormone activity"/>
    <property type="evidence" value="ECO:0007669"/>
    <property type="project" value="InterPro"/>
</dbReference>
<dbReference type="GO" id="GO:0007218">
    <property type="term" value="P:neuropeptide signaling pathway"/>
    <property type="evidence" value="ECO:0007669"/>
    <property type="project" value="UniProtKB-KW"/>
</dbReference>
<dbReference type="Gene3D" id="1.10.2010.10">
    <property type="entry name" value="Crustacean CHH/MIH/GIH neurohormone"/>
    <property type="match status" value="1"/>
</dbReference>
<dbReference type="InterPro" id="IPR018251">
    <property type="entry name" value="Crust_neurhormone_CS"/>
</dbReference>
<dbReference type="InterPro" id="IPR031098">
    <property type="entry name" value="Crust_neurohorm"/>
</dbReference>
<dbReference type="InterPro" id="IPR035957">
    <property type="entry name" value="Crust_neurohorm_sf"/>
</dbReference>
<dbReference type="InterPro" id="IPR001166">
    <property type="entry name" value="Hyperglycemic"/>
</dbReference>
<dbReference type="InterPro" id="IPR001262">
    <property type="entry name" value="Hyperglycemic2"/>
</dbReference>
<dbReference type="Pfam" id="PF01147">
    <property type="entry name" value="Crust_neurohorm"/>
    <property type="match status" value="1"/>
</dbReference>
<dbReference type="PRINTS" id="PR00549">
    <property type="entry name" value="HYPRGLYCEMC2"/>
</dbReference>
<dbReference type="PRINTS" id="PR00550">
    <property type="entry name" value="HYPRGLYCEMIC"/>
</dbReference>
<dbReference type="SUPFAM" id="SSF81778">
    <property type="entry name" value="Crustacean CHH/MIH/GIH neurohormone"/>
    <property type="match status" value="1"/>
</dbReference>
<dbReference type="PROSITE" id="PS01250">
    <property type="entry name" value="CHH_MIH_GIH"/>
    <property type="match status" value="1"/>
</dbReference>
<accession>P55320</accession>
<accession>Q25013</accession>